<accession>P52821</accession>
<organism>
    <name type="scientific">Caenorhabditis elegans</name>
    <dbReference type="NCBI Taxonomy" id="6239"/>
    <lineage>
        <taxon>Eukaryota</taxon>
        <taxon>Metazoa</taxon>
        <taxon>Ecdysozoa</taxon>
        <taxon>Nematoda</taxon>
        <taxon>Chromadorea</taxon>
        <taxon>Rhabditida</taxon>
        <taxon>Rhabditina</taxon>
        <taxon>Rhabditomorpha</taxon>
        <taxon>Rhabditoidea</taxon>
        <taxon>Rhabditidae</taxon>
        <taxon>Peloderinae</taxon>
        <taxon>Caenorhabditis</taxon>
    </lineage>
</organism>
<gene>
    <name type="primary">rps-25</name>
    <name type="ORF">K02B2.5</name>
</gene>
<comment type="similarity">
    <text evidence="2">Belongs to the eukaryotic ribosomal protein eS25 family.</text>
</comment>
<keyword id="KW-0002">3D-structure</keyword>
<keyword id="KW-1185">Reference proteome</keyword>
<keyword id="KW-0687">Ribonucleoprotein</keyword>
<keyword id="KW-0689">Ribosomal protein</keyword>
<dbReference type="EMBL" id="FO080181">
    <property type="protein sequence ID" value="CCD61804.1"/>
    <property type="molecule type" value="Genomic_DNA"/>
</dbReference>
<dbReference type="PIR" id="E88700">
    <property type="entry name" value="E88700"/>
</dbReference>
<dbReference type="RefSeq" id="NP_500895.1">
    <property type="nucleotide sequence ID" value="NM_068494.9"/>
</dbReference>
<dbReference type="PDB" id="9BH5">
    <property type="method" value="EM"/>
    <property type="resolution" value="2.63 A"/>
    <property type="chains" value="AZ=1-117"/>
</dbReference>
<dbReference type="PDB" id="9CAI">
    <property type="method" value="EM"/>
    <property type="resolution" value="2.59 A"/>
    <property type="chains" value="AZ=1-117"/>
</dbReference>
<dbReference type="PDBsum" id="9BH5"/>
<dbReference type="PDBsum" id="9CAI"/>
<dbReference type="EMDB" id="EMD-44533"/>
<dbReference type="EMDB" id="EMD-45392"/>
<dbReference type="SMR" id="P52821"/>
<dbReference type="BioGRID" id="42487">
    <property type="interactions" value="89"/>
</dbReference>
<dbReference type="FunCoup" id="P52821">
    <property type="interactions" value="1830"/>
</dbReference>
<dbReference type="IntAct" id="P52821">
    <property type="interactions" value="1"/>
</dbReference>
<dbReference type="STRING" id="6239.K02B2.5.2"/>
<dbReference type="PaxDb" id="6239-K02B2.5"/>
<dbReference type="PeptideAtlas" id="P52821"/>
<dbReference type="EnsemblMetazoa" id="K02B2.5.1">
    <property type="protein sequence ID" value="K02B2.5.1"/>
    <property type="gene ID" value="WBGene00004494"/>
</dbReference>
<dbReference type="GeneID" id="177365"/>
<dbReference type="KEGG" id="cel:CELE_K02B2.5"/>
<dbReference type="UCSC" id="K02B2.5.1">
    <property type="organism name" value="c. elegans"/>
</dbReference>
<dbReference type="AGR" id="WB:WBGene00004494"/>
<dbReference type="CTD" id="177365"/>
<dbReference type="WormBase" id="K02B2.5">
    <property type="protein sequence ID" value="CE04691"/>
    <property type="gene ID" value="WBGene00004494"/>
    <property type="gene designation" value="rps-25"/>
</dbReference>
<dbReference type="eggNOG" id="KOG1767">
    <property type="taxonomic scope" value="Eukaryota"/>
</dbReference>
<dbReference type="GeneTree" id="ENSGT00390000004856"/>
<dbReference type="HOGENOM" id="CLU_129470_0_1_1"/>
<dbReference type="InParanoid" id="P52821"/>
<dbReference type="OMA" id="KWSKVIV"/>
<dbReference type="OrthoDB" id="10263513at2759"/>
<dbReference type="PhylomeDB" id="P52821"/>
<dbReference type="Reactome" id="R-CEL-156827">
    <property type="pathway name" value="L13a-mediated translational silencing of Ceruloplasmin expression"/>
</dbReference>
<dbReference type="Reactome" id="R-CEL-1799339">
    <property type="pathway name" value="SRP-dependent cotranslational protein targeting to membrane"/>
</dbReference>
<dbReference type="Reactome" id="R-CEL-72649">
    <property type="pathway name" value="Translation initiation complex formation"/>
</dbReference>
<dbReference type="Reactome" id="R-CEL-72689">
    <property type="pathway name" value="Formation of a pool of free 40S subunits"/>
</dbReference>
<dbReference type="Reactome" id="R-CEL-72695">
    <property type="pathway name" value="Formation of the ternary complex, and subsequently, the 43S complex"/>
</dbReference>
<dbReference type="Reactome" id="R-CEL-72702">
    <property type="pathway name" value="Ribosomal scanning and start codon recognition"/>
</dbReference>
<dbReference type="Reactome" id="R-CEL-72706">
    <property type="pathway name" value="GTP hydrolysis and joining of the 60S ribosomal subunit"/>
</dbReference>
<dbReference type="Reactome" id="R-CEL-975956">
    <property type="pathway name" value="Nonsense Mediated Decay (NMD) independent of the Exon Junction Complex (EJC)"/>
</dbReference>
<dbReference type="Reactome" id="R-CEL-975957">
    <property type="pathway name" value="Nonsense Mediated Decay (NMD) enhanced by the Exon Junction Complex (EJC)"/>
</dbReference>
<dbReference type="PRO" id="PR:P52821"/>
<dbReference type="Proteomes" id="UP000001940">
    <property type="component" value="Chromosome IV"/>
</dbReference>
<dbReference type="Bgee" id="WBGene00004494">
    <property type="expression patterns" value="Expressed in adult organism and 4 other cell types or tissues"/>
</dbReference>
<dbReference type="GO" id="GO:0022627">
    <property type="term" value="C:cytosolic small ribosomal subunit"/>
    <property type="evidence" value="ECO:0000318"/>
    <property type="project" value="GO_Central"/>
</dbReference>
<dbReference type="GO" id="GO:0003735">
    <property type="term" value="F:structural constituent of ribosome"/>
    <property type="evidence" value="ECO:0000318"/>
    <property type="project" value="GO_Central"/>
</dbReference>
<dbReference type="FunFam" id="1.10.10.10:FF:000166">
    <property type="entry name" value="40S ribosomal protein S25"/>
    <property type="match status" value="1"/>
</dbReference>
<dbReference type="FunFam" id="3.30.63.20:FF:000001">
    <property type="entry name" value="40S ribosomal protein S25"/>
    <property type="match status" value="1"/>
</dbReference>
<dbReference type="Gene3D" id="3.30.63.20">
    <property type="match status" value="1"/>
</dbReference>
<dbReference type="InterPro" id="IPR004977">
    <property type="entry name" value="Ribosomal_eS25"/>
</dbReference>
<dbReference type="PANTHER" id="PTHR12850">
    <property type="entry name" value="40S RIBOSOMAL PROTEIN S25"/>
    <property type="match status" value="1"/>
</dbReference>
<dbReference type="Pfam" id="PF03297">
    <property type="entry name" value="Ribosomal_S25"/>
    <property type="match status" value="1"/>
</dbReference>
<name>RS25_CAEEL</name>
<evidence type="ECO:0000256" key="1">
    <source>
        <dbReference type="SAM" id="MobiDB-lite"/>
    </source>
</evidence>
<evidence type="ECO:0000305" key="2"/>
<sequence>MPPKKDPKGGKAPPSKKKEGSGGGKAKKKKWSKGKVRDKLNNMVLFDQATYDKLYKEVITYKLITPSVVSERLKVRASLAKAGLKELQAKGLVKCVVHHHGQVVYTRATKEADVIVE</sequence>
<proteinExistence type="evidence at protein level"/>
<reference key="1">
    <citation type="journal article" date="1998" name="Science">
        <title>Genome sequence of the nematode C. elegans: a platform for investigating biology.</title>
        <authorList>
            <consortium name="The C. elegans sequencing consortium"/>
        </authorList>
    </citation>
    <scope>NUCLEOTIDE SEQUENCE [LARGE SCALE GENOMIC DNA]</scope>
    <source>
        <strain>Bristol N2</strain>
    </source>
</reference>
<feature type="chain" id="PRO_0000192876" description="Small ribosomal subunit protein eS25">
    <location>
        <begin position="1"/>
        <end position="117"/>
    </location>
</feature>
<feature type="region of interest" description="Disordered" evidence="1">
    <location>
        <begin position="1"/>
        <end position="34"/>
    </location>
</feature>
<feature type="compositionally biased region" description="Basic residues" evidence="1">
    <location>
        <begin position="25"/>
        <end position="34"/>
    </location>
</feature>
<protein>
    <recommendedName>
        <fullName evidence="2">Small ribosomal subunit protein eS25</fullName>
    </recommendedName>
    <alternativeName>
        <fullName>40S ribosomal protein S25</fullName>
    </alternativeName>
</protein>